<feature type="chain" id="PRO_0000094277" description="Elongation factor P">
    <location>
        <begin position="1"/>
        <end position="185"/>
    </location>
</feature>
<sequence>MISVNDFKTGLTIEVDNGIWRVLDFQHVKPGKGAAFVRSKLRNLRTGAIQEKTFRGGEKVAKAQIDNRKMAYLYADGTNHVFMDNESYEQIELPEDQIAHELKFLKENMEINIIMYQGETIGIDLPNTVELVVTATDPGIKGDTSSGGSKPATLETGLVVQVPFFVNEGDKLVINTTEAAYVSRA</sequence>
<proteinExistence type="inferred from homology"/>
<protein>
    <recommendedName>
        <fullName evidence="1">Elongation factor P</fullName>
        <shortName evidence="1">EF-P</shortName>
    </recommendedName>
</protein>
<gene>
    <name evidence="1" type="primary">efp</name>
    <name type="ordered locus">lmo1355</name>
</gene>
<name>EFP_LISMO</name>
<keyword id="KW-0963">Cytoplasm</keyword>
<keyword id="KW-0251">Elongation factor</keyword>
<keyword id="KW-0648">Protein biosynthesis</keyword>
<keyword id="KW-1185">Reference proteome</keyword>
<accession>P64032</accession>
<accession>Q92BZ9</accession>
<comment type="function">
    <text evidence="1">Involved in peptide bond synthesis. Stimulates efficient translation and peptide-bond synthesis on native or reconstituted 70S ribosomes in vitro. Probably functions indirectly by altering the affinity of the ribosome for aminoacyl-tRNA, thus increasing their reactivity as acceptors for peptidyl transferase.</text>
</comment>
<comment type="pathway">
    <text evidence="1">Protein biosynthesis; polypeptide chain elongation.</text>
</comment>
<comment type="subcellular location">
    <subcellularLocation>
        <location evidence="1">Cytoplasm</location>
    </subcellularLocation>
</comment>
<comment type="similarity">
    <text evidence="1">Belongs to the elongation factor P family.</text>
</comment>
<organism>
    <name type="scientific">Listeria monocytogenes serovar 1/2a (strain ATCC BAA-679 / EGD-e)</name>
    <dbReference type="NCBI Taxonomy" id="169963"/>
    <lineage>
        <taxon>Bacteria</taxon>
        <taxon>Bacillati</taxon>
        <taxon>Bacillota</taxon>
        <taxon>Bacilli</taxon>
        <taxon>Bacillales</taxon>
        <taxon>Listeriaceae</taxon>
        <taxon>Listeria</taxon>
    </lineage>
</organism>
<evidence type="ECO:0000255" key="1">
    <source>
        <dbReference type="HAMAP-Rule" id="MF_00141"/>
    </source>
</evidence>
<reference key="1">
    <citation type="journal article" date="2001" name="Science">
        <title>Comparative genomics of Listeria species.</title>
        <authorList>
            <person name="Glaser P."/>
            <person name="Frangeul L."/>
            <person name="Buchrieser C."/>
            <person name="Rusniok C."/>
            <person name="Amend A."/>
            <person name="Baquero F."/>
            <person name="Berche P."/>
            <person name="Bloecker H."/>
            <person name="Brandt P."/>
            <person name="Chakraborty T."/>
            <person name="Charbit A."/>
            <person name="Chetouani F."/>
            <person name="Couve E."/>
            <person name="de Daruvar A."/>
            <person name="Dehoux P."/>
            <person name="Domann E."/>
            <person name="Dominguez-Bernal G."/>
            <person name="Duchaud E."/>
            <person name="Durant L."/>
            <person name="Dussurget O."/>
            <person name="Entian K.-D."/>
            <person name="Fsihi H."/>
            <person name="Garcia-del Portillo F."/>
            <person name="Garrido P."/>
            <person name="Gautier L."/>
            <person name="Goebel W."/>
            <person name="Gomez-Lopez N."/>
            <person name="Hain T."/>
            <person name="Hauf J."/>
            <person name="Jackson D."/>
            <person name="Jones L.-M."/>
            <person name="Kaerst U."/>
            <person name="Kreft J."/>
            <person name="Kuhn M."/>
            <person name="Kunst F."/>
            <person name="Kurapkat G."/>
            <person name="Madueno E."/>
            <person name="Maitournam A."/>
            <person name="Mata Vicente J."/>
            <person name="Ng E."/>
            <person name="Nedjari H."/>
            <person name="Nordsiek G."/>
            <person name="Novella S."/>
            <person name="de Pablos B."/>
            <person name="Perez-Diaz J.-C."/>
            <person name="Purcell R."/>
            <person name="Remmel B."/>
            <person name="Rose M."/>
            <person name="Schlueter T."/>
            <person name="Simoes N."/>
            <person name="Tierrez A."/>
            <person name="Vazquez-Boland J.-A."/>
            <person name="Voss H."/>
            <person name="Wehland J."/>
            <person name="Cossart P."/>
        </authorList>
    </citation>
    <scope>NUCLEOTIDE SEQUENCE [LARGE SCALE GENOMIC DNA]</scope>
    <source>
        <strain>ATCC BAA-679 / EGD-e</strain>
    </source>
</reference>
<dbReference type="EMBL" id="AL591978">
    <property type="protein sequence ID" value="CAC99433.1"/>
    <property type="molecule type" value="Genomic_DNA"/>
</dbReference>
<dbReference type="PIR" id="AC1244">
    <property type="entry name" value="AC1244"/>
</dbReference>
<dbReference type="RefSeq" id="NP_464880.1">
    <property type="nucleotide sequence ID" value="NC_003210.1"/>
</dbReference>
<dbReference type="RefSeq" id="WP_003722482.1">
    <property type="nucleotide sequence ID" value="NZ_CP149495.1"/>
</dbReference>
<dbReference type="SMR" id="P64032"/>
<dbReference type="STRING" id="169963.gene:17594012"/>
<dbReference type="PaxDb" id="169963-lmo1355"/>
<dbReference type="EnsemblBacteria" id="CAC99433">
    <property type="protein sequence ID" value="CAC99433"/>
    <property type="gene ID" value="CAC99433"/>
</dbReference>
<dbReference type="GeneID" id="93234772"/>
<dbReference type="GeneID" id="987744"/>
<dbReference type="KEGG" id="lmo:lmo1355"/>
<dbReference type="PATRIC" id="fig|169963.11.peg.1392"/>
<dbReference type="eggNOG" id="COG0231">
    <property type="taxonomic scope" value="Bacteria"/>
</dbReference>
<dbReference type="HOGENOM" id="CLU_074944_0_1_9"/>
<dbReference type="OrthoDB" id="9801844at2"/>
<dbReference type="PhylomeDB" id="P64032"/>
<dbReference type="BioCyc" id="LMON169963:LMO1355-MONOMER"/>
<dbReference type="UniPathway" id="UPA00345"/>
<dbReference type="Proteomes" id="UP000000817">
    <property type="component" value="Chromosome"/>
</dbReference>
<dbReference type="GO" id="GO:0005737">
    <property type="term" value="C:cytoplasm"/>
    <property type="evidence" value="ECO:0000318"/>
    <property type="project" value="GO_Central"/>
</dbReference>
<dbReference type="GO" id="GO:0003746">
    <property type="term" value="F:translation elongation factor activity"/>
    <property type="evidence" value="ECO:0000318"/>
    <property type="project" value="GO_Central"/>
</dbReference>
<dbReference type="GO" id="GO:0043043">
    <property type="term" value="P:peptide biosynthetic process"/>
    <property type="evidence" value="ECO:0007669"/>
    <property type="project" value="InterPro"/>
</dbReference>
<dbReference type="CDD" id="cd04470">
    <property type="entry name" value="S1_EF-P_repeat_1"/>
    <property type="match status" value="1"/>
</dbReference>
<dbReference type="CDD" id="cd05794">
    <property type="entry name" value="S1_EF-P_repeat_2"/>
    <property type="match status" value="1"/>
</dbReference>
<dbReference type="FunFam" id="2.30.30.30:FF:000010">
    <property type="entry name" value="Elongation factor P"/>
    <property type="match status" value="1"/>
</dbReference>
<dbReference type="FunFam" id="2.40.50.140:FF:000004">
    <property type="entry name" value="Elongation factor P"/>
    <property type="match status" value="1"/>
</dbReference>
<dbReference type="FunFam" id="2.40.50.140:FF:000009">
    <property type="entry name" value="Elongation factor P"/>
    <property type="match status" value="1"/>
</dbReference>
<dbReference type="Gene3D" id="2.30.30.30">
    <property type="match status" value="1"/>
</dbReference>
<dbReference type="Gene3D" id="2.40.50.140">
    <property type="entry name" value="Nucleic acid-binding proteins"/>
    <property type="match status" value="2"/>
</dbReference>
<dbReference type="HAMAP" id="MF_00141">
    <property type="entry name" value="EF_P"/>
    <property type="match status" value="1"/>
</dbReference>
<dbReference type="InterPro" id="IPR015365">
    <property type="entry name" value="Elong-fact-P_C"/>
</dbReference>
<dbReference type="InterPro" id="IPR012340">
    <property type="entry name" value="NA-bd_OB-fold"/>
</dbReference>
<dbReference type="InterPro" id="IPR014722">
    <property type="entry name" value="Rib_uL2_dom2"/>
</dbReference>
<dbReference type="InterPro" id="IPR020599">
    <property type="entry name" value="Transl_elong_fac_P/YeiP"/>
</dbReference>
<dbReference type="InterPro" id="IPR013185">
    <property type="entry name" value="Transl_elong_KOW-like"/>
</dbReference>
<dbReference type="InterPro" id="IPR001059">
    <property type="entry name" value="Transl_elong_P/YeiP_cen"/>
</dbReference>
<dbReference type="InterPro" id="IPR013852">
    <property type="entry name" value="Transl_elong_P/YeiP_CS"/>
</dbReference>
<dbReference type="InterPro" id="IPR011768">
    <property type="entry name" value="Transl_elongation_fac_P"/>
</dbReference>
<dbReference type="InterPro" id="IPR008991">
    <property type="entry name" value="Translation_prot_SH3-like_sf"/>
</dbReference>
<dbReference type="NCBIfam" id="TIGR00038">
    <property type="entry name" value="efp"/>
    <property type="match status" value="1"/>
</dbReference>
<dbReference type="NCBIfam" id="NF001810">
    <property type="entry name" value="PRK00529.1"/>
    <property type="match status" value="1"/>
</dbReference>
<dbReference type="PANTHER" id="PTHR30053">
    <property type="entry name" value="ELONGATION FACTOR P"/>
    <property type="match status" value="1"/>
</dbReference>
<dbReference type="PANTHER" id="PTHR30053:SF12">
    <property type="entry name" value="ELONGATION FACTOR P (EF-P) FAMILY PROTEIN"/>
    <property type="match status" value="1"/>
</dbReference>
<dbReference type="Pfam" id="PF01132">
    <property type="entry name" value="EFP"/>
    <property type="match status" value="1"/>
</dbReference>
<dbReference type="Pfam" id="PF08207">
    <property type="entry name" value="EFP_N"/>
    <property type="match status" value="1"/>
</dbReference>
<dbReference type="Pfam" id="PF09285">
    <property type="entry name" value="Elong-fact-P_C"/>
    <property type="match status" value="1"/>
</dbReference>
<dbReference type="PIRSF" id="PIRSF005901">
    <property type="entry name" value="EF-P"/>
    <property type="match status" value="1"/>
</dbReference>
<dbReference type="SMART" id="SM01185">
    <property type="entry name" value="EFP"/>
    <property type="match status" value="1"/>
</dbReference>
<dbReference type="SMART" id="SM00841">
    <property type="entry name" value="Elong-fact-P_C"/>
    <property type="match status" value="1"/>
</dbReference>
<dbReference type="SUPFAM" id="SSF50249">
    <property type="entry name" value="Nucleic acid-binding proteins"/>
    <property type="match status" value="2"/>
</dbReference>
<dbReference type="SUPFAM" id="SSF50104">
    <property type="entry name" value="Translation proteins SH3-like domain"/>
    <property type="match status" value="1"/>
</dbReference>
<dbReference type="PROSITE" id="PS01275">
    <property type="entry name" value="EFP"/>
    <property type="match status" value="1"/>
</dbReference>